<comment type="subcellular location">
    <subcellularLocation>
        <location evidence="4 5">Secreted</location>
    </subcellularLocation>
</comment>
<feature type="signal peptide" evidence="1">
    <location>
        <begin position="1"/>
        <end position="22"/>
    </location>
</feature>
<feature type="chain" id="PRO_0000434667" description="Uncharacterized secreted protein ARB_04696" evidence="1">
    <location>
        <begin position="23"/>
        <end position="512"/>
    </location>
</feature>
<feature type="region of interest" description="Disordered" evidence="3">
    <location>
        <begin position="251"/>
        <end position="282"/>
    </location>
</feature>
<feature type="glycosylation site" description="N-linked (GlcNAc...) asparagine" evidence="2">
    <location>
        <position position="167"/>
    </location>
</feature>
<accession>D4AK94</accession>
<protein>
    <recommendedName>
        <fullName>Uncharacterized secreted protein ARB_04696</fullName>
    </recommendedName>
</protein>
<proteinExistence type="evidence at protein level"/>
<gene>
    <name type="ORF">ARB_04696</name>
</gene>
<dbReference type="EMBL" id="ABSU01000001">
    <property type="protein sequence ID" value="EFE37167.1"/>
    <property type="molecule type" value="Genomic_DNA"/>
</dbReference>
<dbReference type="RefSeq" id="XP_003017812.1">
    <property type="nucleotide sequence ID" value="XM_003017766.1"/>
</dbReference>
<dbReference type="GeneID" id="9522659"/>
<dbReference type="KEGG" id="abe:ARB_04696"/>
<dbReference type="eggNOG" id="ENOG502QPYR">
    <property type="taxonomic scope" value="Eukaryota"/>
</dbReference>
<dbReference type="HOGENOM" id="CLU_026803_0_0_1"/>
<dbReference type="OMA" id="GIAWAIP"/>
<dbReference type="Proteomes" id="UP000008866">
    <property type="component" value="Unassembled WGS sequence"/>
</dbReference>
<dbReference type="GO" id="GO:0005576">
    <property type="term" value="C:extracellular region"/>
    <property type="evidence" value="ECO:0007669"/>
    <property type="project" value="UniProtKB-SubCell"/>
</dbReference>
<dbReference type="InterPro" id="IPR027372">
    <property type="entry name" value="Phytase-like_dom"/>
</dbReference>
<dbReference type="PANTHER" id="PTHR37957">
    <property type="entry name" value="BLR7070 PROTEIN"/>
    <property type="match status" value="1"/>
</dbReference>
<dbReference type="PANTHER" id="PTHR37957:SF1">
    <property type="entry name" value="PHYTASE-LIKE DOMAIN-CONTAINING PROTEIN"/>
    <property type="match status" value="1"/>
</dbReference>
<dbReference type="Pfam" id="PF13449">
    <property type="entry name" value="Phytase-like"/>
    <property type="match status" value="1"/>
</dbReference>
<dbReference type="SUPFAM" id="SSF63825">
    <property type="entry name" value="YWTD domain"/>
    <property type="match status" value="1"/>
</dbReference>
<organism>
    <name type="scientific">Arthroderma benhamiae (strain ATCC MYA-4681 / CBS 112371)</name>
    <name type="common">Trichophyton mentagrophytes</name>
    <dbReference type="NCBI Taxonomy" id="663331"/>
    <lineage>
        <taxon>Eukaryota</taxon>
        <taxon>Fungi</taxon>
        <taxon>Dikarya</taxon>
        <taxon>Ascomycota</taxon>
        <taxon>Pezizomycotina</taxon>
        <taxon>Eurotiomycetes</taxon>
        <taxon>Eurotiomycetidae</taxon>
        <taxon>Onygenales</taxon>
        <taxon>Arthrodermataceae</taxon>
        <taxon>Trichophyton</taxon>
    </lineage>
</organism>
<evidence type="ECO:0000255" key="1"/>
<evidence type="ECO:0000255" key="2">
    <source>
        <dbReference type="PROSITE-ProRule" id="PRU00498"/>
    </source>
</evidence>
<evidence type="ECO:0000256" key="3">
    <source>
        <dbReference type="SAM" id="MobiDB-lite"/>
    </source>
</evidence>
<evidence type="ECO:0000269" key="4">
    <source>
    </source>
</evidence>
<evidence type="ECO:0000269" key="5">
    <source>
    </source>
</evidence>
<sequence>MVSSLIYSLCAVSGLLATTVNGLPKKGHRAETSLPIVKQTKCGSHTYQYNGLVGYGTVPSNAVDKYGDTLGGFGSSIAIEQASWKKNSDGTYEGIAWAIPDRGWNTQGTLNVQSRIQKLGLKLTLAPGATVSNPSNPNLEIKLLDTLLLTDPDGTPMTGLDADFSGNISYPGFPGMPVATYPGDGFGGSGAGGRRISLDSEGIVIGNDGAFWVSDEYGPYVYKFSREGRMLQAIQPPDAYIPRRNGKVSFSAASPPIYEPDRQTDPEDPETGRNNNQGFEGLTISRDGKTLYVLIQSALNNDGGPKKRYRKQARMLEYDISGTTPKYTHEYVVTLATFVDPHEQDPSKATITASQSEIHYLPTGDFLILSRDSNAGRAAQYTESVYRHADIISKSTQTTDIKSKSNDKADGSIASSEGVLDDGINPLDYCSFVDYNLNSELGKFRLHNGGAQDEHLLNEKWESLALVPVDPSKEFEDNGKNEYFLISFSDNDYITQDGTSSSLLLFFSSASE</sequence>
<reference key="1">
    <citation type="journal article" date="2011" name="Genome Biol.">
        <title>Comparative and functional genomics provide insights into the pathogenicity of dermatophytic fungi.</title>
        <authorList>
            <person name="Burmester A."/>
            <person name="Shelest E."/>
            <person name="Gloeckner G."/>
            <person name="Heddergott C."/>
            <person name="Schindler S."/>
            <person name="Staib P."/>
            <person name="Heidel A."/>
            <person name="Felder M."/>
            <person name="Petzold A."/>
            <person name="Szafranski K."/>
            <person name="Feuermann M."/>
            <person name="Pedruzzi I."/>
            <person name="Priebe S."/>
            <person name="Groth M."/>
            <person name="Winkler R."/>
            <person name="Li W."/>
            <person name="Kniemeyer O."/>
            <person name="Schroeckh V."/>
            <person name="Hertweck C."/>
            <person name="Hube B."/>
            <person name="White T.C."/>
            <person name="Platzer M."/>
            <person name="Guthke R."/>
            <person name="Heitman J."/>
            <person name="Woestemeyer J."/>
            <person name="Zipfel P.F."/>
            <person name="Monod M."/>
            <person name="Brakhage A.A."/>
        </authorList>
    </citation>
    <scope>NUCLEOTIDE SEQUENCE [LARGE SCALE GENOMIC DNA]</scope>
    <scope>IDENTIFICATION BY MASS SPECTROMETRY</scope>
    <scope>SUBCELLULAR LOCATION</scope>
    <source>
        <strain>ATCC MYA-4681 / CBS 112371</strain>
    </source>
</reference>
<reference key="2">
    <citation type="journal article" date="2011" name="Proteomics">
        <title>Identification of novel secreted proteases during extracellular proteolysis by dermatophytes at acidic pH.</title>
        <authorList>
            <person name="Sriranganadane D."/>
            <person name="Waridel P."/>
            <person name="Salamin K."/>
            <person name="Feuermann M."/>
            <person name="Mignon B."/>
            <person name="Staib P."/>
            <person name="Neuhaus J.M."/>
            <person name="Quadroni M."/>
            <person name="Monod M."/>
        </authorList>
    </citation>
    <scope>IDENTIFICATION BY MASS SPECTROMETRY</scope>
    <scope>SUBCELLULAR LOCATION</scope>
</reference>
<keyword id="KW-0325">Glycoprotein</keyword>
<keyword id="KW-1185">Reference proteome</keyword>
<keyword id="KW-0964">Secreted</keyword>
<keyword id="KW-0732">Signal</keyword>
<name>A4696_ARTBC</name>